<dbReference type="EMBL" id="CP000444">
    <property type="protein sequence ID" value="ABI41691.1"/>
    <property type="molecule type" value="Genomic_DNA"/>
</dbReference>
<dbReference type="SMR" id="Q0HYW4"/>
<dbReference type="KEGG" id="shm:Shewmr7_0689"/>
<dbReference type="HOGENOM" id="CLU_148710_2_3_6"/>
<dbReference type="GO" id="GO:0022627">
    <property type="term" value="C:cytosolic small ribosomal subunit"/>
    <property type="evidence" value="ECO:0007669"/>
    <property type="project" value="TreeGrafter"/>
</dbReference>
<dbReference type="GO" id="GO:0070181">
    <property type="term" value="F:small ribosomal subunit rRNA binding"/>
    <property type="evidence" value="ECO:0007669"/>
    <property type="project" value="TreeGrafter"/>
</dbReference>
<dbReference type="GO" id="GO:0003735">
    <property type="term" value="F:structural constituent of ribosome"/>
    <property type="evidence" value="ECO:0007669"/>
    <property type="project" value="InterPro"/>
</dbReference>
<dbReference type="GO" id="GO:0006412">
    <property type="term" value="P:translation"/>
    <property type="evidence" value="ECO:0007669"/>
    <property type="project" value="UniProtKB-UniRule"/>
</dbReference>
<dbReference type="FunFam" id="4.10.640.10:FF:000001">
    <property type="entry name" value="30S ribosomal protein S18"/>
    <property type="match status" value="1"/>
</dbReference>
<dbReference type="Gene3D" id="4.10.640.10">
    <property type="entry name" value="Ribosomal protein S18"/>
    <property type="match status" value="1"/>
</dbReference>
<dbReference type="HAMAP" id="MF_00270">
    <property type="entry name" value="Ribosomal_bS18"/>
    <property type="match status" value="1"/>
</dbReference>
<dbReference type="InterPro" id="IPR001648">
    <property type="entry name" value="Ribosomal_bS18"/>
</dbReference>
<dbReference type="InterPro" id="IPR018275">
    <property type="entry name" value="Ribosomal_bS18_CS"/>
</dbReference>
<dbReference type="InterPro" id="IPR036870">
    <property type="entry name" value="Ribosomal_bS18_sf"/>
</dbReference>
<dbReference type="NCBIfam" id="TIGR00165">
    <property type="entry name" value="S18"/>
    <property type="match status" value="1"/>
</dbReference>
<dbReference type="PANTHER" id="PTHR13479">
    <property type="entry name" value="30S RIBOSOMAL PROTEIN S18"/>
    <property type="match status" value="1"/>
</dbReference>
<dbReference type="PANTHER" id="PTHR13479:SF40">
    <property type="entry name" value="SMALL RIBOSOMAL SUBUNIT PROTEIN BS18M"/>
    <property type="match status" value="1"/>
</dbReference>
<dbReference type="Pfam" id="PF01084">
    <property type="entry name" value="Ribosomal_S18"/>
    <property type="match status" value="1"/>
</dbReference>
<dbReference type="PRINTS" id="PR00974">
    <property type="entry name" value="RIBOSOMALS18"/>
</dbReference>
<dbReference type="SUPFAM" id="SSF46911">
    <property type="entry name" value="Ribosomal protein S18"/>
    <property type="match status" value="1"/>
</dbReference>
<dbReference type="PROSITE" id="PS00057">
    <property type="entry name" value="RIBOSOMAL_S18"/>
    <property type="match status" value="1"/>
</dbReference>
<feature type="chain" id="PRO_1000003608" description="Small ribosomal subunit protein bS18">
    <location>
        <begin position="1"/>
        <end position="75"/>
    </location>
</feature>
<evidence type="ECO:0000255" key="1">
    <source>
        <dbReference type="HAMAP-Rule" id="MF_00270"/>
    </source>
</evidence>
<evidence type="ECO:0000305" key="2"/>
<protein>
    <recommendedName>
        <fullName evidence="1">Small ribosomal subunit protein bS18</fullName>
    </recommendedName>
    <alternativeName>
        <fullName evidence="2">30S ribosomal protein S18</fullName>
    </alternativeName>
</protein>
<comment type="function">
    <text evidence="1">Binds as a heterodimer with protein bS6 to the central domain of the 16S rRNA, where it helps stabilize the platform of the 30S subunit.</text>
</comment>
<comment type="subunit">
    <text evidence="1">Part of the 30S ribosomal subunit. Forms a tight heterodimer with protein bS6.</text>
</comment>
<comment type="similarity">
    <text evidence="1">Belongs to the bacterial ribosomal protein bS18 family.</text>
</comment>
<keyword id="KW-0687">Ribonucleoprotein</keyword>
<keyword id="KW-0689">Ribosomal protein</keyword>
<keyword id="KW-0694">RNA-binding</keyword>
<keyword id="KW-0699">rRNA-binding</keyword>
<proteinExistence type="inferred from homology"/>
<gene>
    <name evidence="1" type="primary">rpsR</name>
    <name type="ordered locus">Shewmr7_0689</name>
</gene>
<name>RS18_SHESR</name>
<sequence>MARYFRRRKFCRFTAEGVAEIDYKDIVTLKNYITESGKIVPSRITGTSAKYQRQLARAIKRARYLSLLPYTDLHQ</sequence>
<reference key="1">
    <citation type="submission" date="2006-08" db="EMBL/GenBank/DDBJ databases">
        <title>Complete sequence of chromosome 1 of Shewanella sp. MR-7.</title>
        <authorList>
            <person name="Copeland A."/>
            <person name="Lucas S."/>
            <person name="Lapidus A."/>
            <person name="Barry K."/>
            <person name="Detter J.C."/>
            <person name="Glavina del Rio T."/>
            <person name="Hammon N."/>
            <person name="Israni S."/>
            <person name="Dalin E."/>
            <person name="Tice H."/>
            <person name="Pitluck S."/>
            <person name="Kiss H."/>
            <person name="Brettin T."/>
            <person name="Bruce D."/>
            <person name="Han C."/>
            <person name="Tapia R."/>
            <person name="Gilna P."/>
            <person name="Schmutz J."/>
            <person name="Larimer F."/>
            <person name="Land M."/>
            <person name="Hauser L."/>
            <person name="Kyrpides N."/>
            <person name="Mikhailova N."/>
            <person name="Nealson K."/>
            <person name="Konstantinidis K."/>
            <person name="Klappenbach J."/>
            <person name="Tiedje J."/>
            <person name="Richardson P."/>
        </authorList>
    </citation>
    <scope>NUCLEOTIDE SEQUENCE [LARGE SCALE GENOMIC DNA]</scope>
    <source>
        <strain>MR-7</strain>
    </source>
</reference>
<organism>
    <name type="scientific">Shewanella sp. (strain MR-7)</name>
    <dbReference type="NCBI Taxonomy" id="60481"/>
    <lineage>
        <taxon>Bacteria</taxon>
        <taxon>Pseudomonadati</taxon>
        <taxon>Pseudomonadota</taxon>
        <taxon>Gammaproteobacteria</taxon>
        <taxon>Alteromonadales</taxon>
        <taxon>Shewanellaceae</taxon>
        <taxon>Shewanella</taxon>
    </lineage>
</organism>
<accession>Q0HYW4</accession>